<accession>Q6HM28</accession>
<name>CPFC2_BACHK</name>
<feature type="chain" id="PRO_0000175112" description="Coproporphyrin III ferrochelatase 2">
    <location>
        <begin position="1"/>
        <end position="319"/>
    </location>
</feature>
<feature type="binding site" description="axial binding residue" evidence="1">
    <location>
        <position position="13"/>
    </location>
    <ligand>
        <name>Fe-coproporphyrin III</name>
        <dbReference type="ChEBI" id="CHEBI:68438"/>
    </ligand>
    <ligandPart>
        <name>Fe</name>
        <dbReference type="ChEBI" id="CHEBI:18248"/>
    </ligandPart>
</feature>
<feature type="binding site" evidence="1">
    <location>
        <position position="30"/>
    </location>
    <ligand>
        <name>Fe-coproporphyrin III</name>
        <dbReference type="ChEBI" id="CHEBI:68438"/>
    </ligand>
</feature>
<feature type="binding site" evidence="1">
    <location>
        <begin position="46"/>
        <end position="47"/>
    </location>
    <ligand>
        <name>Fe-coproporphyrin III</name>
        <dbReference type="ChEBI" id="CHEBI:68438"/>
    </ligand>
</feature>
<feature type="binding site" evidence="1">
    <location>
        <position position="54"/>
    </location>
    <ligand>
        <name>Fe-coproporphyrin III</name>
        <dbReference type="ChEBI" id="CHEBI:68438"/>
    </ligand>
</feature>
<feature type="binding site" evidence="1">
    <location>
        <position position="125"/>
    </location>
    <ligand>
        <name>Fe-coproporphyrin III</name>
        <dbReference type="ChEBI" id="CHEBI:68438"/>
    </ligand>
</feature>
<feature type="binding site" evidence="1">
    <location>
        <position position="181"/>
    </location>
    <ligand>
        <name>Fe(2+)</name>
        <dbReference type="ChEBI" id="CHEBI:29033"/>
    </ligand>
</feature>
<feature type="binding site" evidence="1">
    <location>
        <position position="262"/>
    </location>
    <ligand>
        <name>Fe(2+)</name>
        <dbReference type="ChEBI" id="CHEBI:29033"/>
    </ligand>
</feature>
<evidence type="ECO:0000255" key="1">
    <source>
        <dbReference type="HAMAP-Rule" id="MF_00323"/>
    </source>
</evidence>
<reference key="1">
    <citation type="journal article" date="2006" name="J. Bacteriol.">
        <title>Pathogenomic sequence analysis of Bacillus cereus and Bacillus thuringiensis isolates closely related to Bacillus anthracis.</title>
        <authorList>
            <person name="Han C.S."/>
            <person name="Xie G."/>
            <person name="Challacombe J.F."/>
            <person name="Altherr M.R."/>
            <person name="Bhotika S.S."/>
            <person name="Bruce D."/>
            <person name="Campbell C.S."/>
            <person name="Campbell M.L."/>
            <person name="Chen J."/>
            <person name="Chertkov O."/>
            <person name="Cleland C."/>
            <person name="Dimitrijevic M."/>
            <person name="Doggett N.A."/>
            <person name="Fawcett J.J."/>
            <person name="Glavina T."/>
            <person name="Goodwin L.A."/>
            <person name="Hill K.K."/>
            <person name="Hitchcock P."/>
            <person name="Jackson P.J."/>
            <person name="Keim P."/>
            <person name="Kewalramani A.R."/>
            <person name="Longmire J."/>
            <person name="Lucas S."/>
            <person name="Malfatti S."/>
            <person name="McMurry K."/>
            <person name="Meincke L.J."/>
            <person name="Misra M."/>
            <person name="Moseman B.L."/>
            <person name="Mundt M."/>
            <person name="Munk A.C."/>
            <person name="Okinaka R.T."/>
            <person name="Parson-Quintana B."/>
            <person name="Reilly L.P."/>
            <person name="Richardson P."/>
            <person name="Robinson D.L."/>
            <person name="Rubin E."/>
            <person name="Saunders E."/>
            <person name="Tapia R."/>
            <person name="Tesmer J.G."/>
            <person name="Thayer N."/>
            <person name="Thompson L.S."/>
            <person name="Tice H."/>
            <person name="Ticknor L.O."/>
            <person name="Wills P.L."/>
            <person name="Brettin T.S."/>
            <person name="Gilna P."/>
        </authorList>
    </citation>
    <scope>NUCLEOTIDE SEQUENCE [LARGE SCALE GENOMIC DNA]</scope>
    <source>
        <strain>97-27</strain>
    </source>
</reference>
<keyword id="KW-0963">Cytoplasm</keyword>
<keyword id="KW-0350">Heme biosynthesis</keyword>
<keyword id="KW-0408">Iron</keyword>
<keyword id="KW-0456">Lyase</keyword>
<keyword id="KW-0479">Metal-binding</keyword>
<keyword id="KW-0627">Porphyrin biosynthesis</keyword>
<comment type="function">
    <text evidence="1">Involved in coproporphyrin-dependent heme b biosynthesis. Catalyzes the insertion of ferrous iron into coproporphyrin III to form Fe-coproporphyrin III.</text>
</comment>
<comment type="catalytic activity">
    <reaction evidence="1">
        <text>Fe-coproporphyrin III + 2 H(+) = coproporphyrin III + Fe(2+)</text>
        <dbReference type="Rhea" id="RHEA:49572"/>
        <dbReference type="ChEBI" id="CHEBI:15378"/>
        <dbReference type="ChEBI" id="CHEBI:29033"/>
        <dbReference type="ChEBI" id="CHEBI:68438"/>
        <dbReference type="ChEBI" id="CHEBI:131725"/>
        <dbReference type="EC" id="4.99.1.9"/>
    </reaction>
    <physiologicalReaction direction="right-to-left" evidence="1">
        <dbReference type="Rhea" id="RHEA:49574"/>
    </physiologicalReaction>
</comment>
<comment type="pathway">
    <text evidence="1">Porphyrin-containing compound metabolism; protoheme biosynthesis.</text>
</comment>
<comment type="subcellular location">
    <subcellularLocation>
        <location evidence="1">Cytoplasm</location>
    </subcellularLocation>
</comment>
<comment type="similarity">
    <text evidence="1">Belongs to the ferrochelatase family.</text>
</comment>
<proteinExistence type="inferred from homology"/>
<gene>
    <name evidence="1" type="primary">cpfC2</name>
    <name type="ordered locus">BT9727_1056</name>
</gene>
<organism>
    <name type="scientific">Bacillus thuringiensis subsp. konkukian (strain 97-27)</name>
    <dbReference type="NCBI Taxonomy" id="281309"/>
    <lineage>
        <taxon>Bacteria</taxon>
        <taxon>Bacillati</taxon>
        <taxon>Bacillota</taxon>
        <taxon>Bacilli</taxon>
        <taxon>Bacillales</taxon>
        <taxon>Bacillaceae</taxon>
        <taxon>Bacillus</taxon>
        <taxon>Bacillus cereus group</taxon>
    </lineage>
</organism>
<sequence length="319" mass="36320">MKKKKIGLLVMAYGTPDSLDEVEAYYTHIRHGRKPSEEALQDLIGRYKAIGGISPLAKITKEQAHKLTDSMNNMFTEYEFNCYLGLKHTAPFIEDAVEEMKRDGIEQAISIVLAPHYSTFSIKAYNERAIRLSEEIGGPVIEPIDQWYDEPKFISYWADQIKETFTKIEDNEKAVVIFSAHSLPEKIIAAGDPYVEQLQYTADLIAAAANIQNYTIGWQSAGNTSDSWIGPDVQDLTRDLFEEHRYESFIYCPVGFVAEHLEVLYDNDYECKVVTDELNAAYFRPTMPNAQSTFIDCLATIVSRKMKEIVDKELILNNN</sequence>
<protein>
    <recommendedName>
        <fullName evidence="1">Coproporphyrin III ferrochelatase 2</fullName>
        <ecNumber evidence="1">4.99.1.9</ecNumber>
    </recommendedName>
</protein>
<dbReference type="EC" id="4.99.1.9" evidence="1"/>
<dbReference type="EMBL" id="AE017355">
    <property type="protein sequence ID" value="AAT62227.1"/>
    <property type="molecule type" value="Genomic_DNA"/>
</dbReference>
<dbReference type="RefSeq" id="YP_035393.1">
    <property type="nucleotide sequence ID" value="NC_005957.1"/>
</dbReference>
<dbReference type="SMR" id="Q6HM28"/>
<dbReference type="KEGG" id="btk:BT9727_1056"/>
<dbReference type="PATRIC" id="fig|281309.8.peg.1110"/>
<dbReference type="HOGENOM" id="CLU_018884_2_1_9"/>
<dbReference type="UniPathway" id="UPA00252"/>
<dbReference type="Proteomes" id="UP000001301">
    <property type="component" value="Chromosome"/>
</dbReference>
<dbReference type="GO" id="GO:0005737">
    <property type="term" value="C:cytoplasm"/>
    <property type="evidence" value="ECO:0007669"/>
    <property type="project" value="UniProtKB-SubCell"/>
</dbReference>
<dbReference type="GO" id="GO:0004325">
    <property type="term" value="F:ferrochelatase activity"/>
    <property type="evidence" value="ECO:0007669"/>
    <property type="project" value="UniProtKB-UniRule"/>
</dbReference>
<dbReference type="GO" id="GO:0046872">
    <property type="term" value="F:metal ion binding"/>
    <property type="evidence" value="ECO:0007669"/>
    <property type="project" value="UniProtKB-KW"/>
</dbReference>
<dbReference type="GO" id="GO:0006783">
    <property type="term" value="P:heme biosynthetic process"/>
    <property type="evidence" value="ECO:0007669"/>
    <property type="project" value="UniProtKB-UniRule"/>
</dbReference>
<dbReference type="CDD" id="cd00419">
    <property type="entry name" value="Ferrochelatase_C"/>
    <property type="match status" value="1"/>
</dbReference>
<dbReference type="CDD" id="cd03411">
    <property type="entry name" value="Ferrochelatase_N"/>
    <property type="match status" value="1"/>
</dbReference>
<dbReference type="FunFam" id="3.40.50.1400:FF:000009">
    <property type="entry name" value="Ferrochelatase"/>
    <property type="match status" value="1"/>
</dbReference>
<dbReference type="Gene3D" id="3.40.50.1400">
    <property type="match status" value="2"/>
</dbReference>
<dbReference type="HAMAP" id="MF_00323">
    <property type="entry name" value="Ferrochelatase"/>
    <property type="match status" value="1"/>
</dbReference>
<dbReference type="InterPro" id="IPR001015">
    <property type="entry name" value="Ferrochelatase"/>
</dbReference>
<dbReference type="InterPro" id="IPR019772">
    <property type="entry name" value="Ferrochelatase_AS"/>
</dbReference>
<dbReference type="InterPro" id="IPR033644">
    <property type="entry name" value="Ferrochelatase_C"/>
</dbReference>
<dbReference type="InterPro" id="IPR033659">
    <property type="entry name" value="Ferrochelatase_N"/>
</dbReference>
<dbReference type="NCBIfam" id="TIGR00109">
    <property type="entry name" value="hemH"/>
    <property type="match status" value="1"/>
</dbReference>
<dbReference type="NCBIfam" id="NF009095">
    <property type="entry name" value="PRK12435.1"/>
    <property type="match status" value="1"/>
</dbReference>
<dbReference type="PANTHER" id="PTHR11108">
    <property type="entry name" value="FERROCHELATASE"/>
    <property type="match status" value="1"/>
</dbReference>
<dbReference type="PANTHER" id="PTHR11108:SF1">
    <property type="entry name" value="FERROCHELATASE, MITOCHONDRIAL"/>
    <property type="match status" value="1"/>
</dbReference>
<dbReference type="Pfam" id="PF00762">
    <property type="entry name" value="Ferrochelatase"/>
    <property type="match status" value="1"/>
</dbReference>
<dbReference type="SUPFAM" id="SSF53800">
    <property type="entry name" value="Chelatase"/>
    <property type="match status" value="1"/>
</dbReference>
<dbReference type="PROSITE" id="PS00534">
    <property type="entry name" value="FERROCHELATASE"/>
    <property type="match status" value="1"/>
</dbReference>